<keyword id="KW-0002">3D-structure</keyword>
<keyword id="KW-0051">Antiviral defense</keyword>
<keyword id="KW-0255">Endonuclease</keyword>
<keyword id="KW-0378">Hydrolase</keyword>
<keyword id="KW-0460">Magnesium</keyword>
<keyword id="KW-0479">Metal-binding</keyword>
<keyword id="KW-0540">Nuclease</keyword>
<keyword id="KW-0614">Plasmid</keyword>
<keyword id="KW-1185">Reference proteome</keyword>
<comment type="function">
    <text evidence="1">CRISPR (clustered regularly interspaced short palindromic repeat), is an adaptive immune system that provides protection against mobile genetic elements (viruses, transposable elements and conjugative plasmids). CRISPR clusters contain sequences complementary to antecedent mobile elements and target invading nucleic acids. CRISPR clusters are transcribed and processed into CRISPR RNA (crRNA). Functions as a ssRNA-specific endoribonuclease. Involved in the integration of spacer DNA into the CRISPR cassette (By similarity).</text>
</comment>
<comment type="cofactor">
    <cofactor evidence="1">
        <name>Mg(2+)</name>
        <dbReference type="ChEBI" id="CHEBI:18420"/>
    </cofactor>
</comment>
<comment type="subunit">
    <text evidence="1 3">Forms a heterotetramer with a Cas1 homodimer (By similarity). Homodimer.</text>
</comment>
<comment type="similarity">
    <text evidence="4">Belongs to the CRISPR-associated endoribonuclease Cas2 protein family.</text>
</comment>
<geneLocation type="plasmid">
    <name>pDV</name>
</geneLocation>
<feature type="chain" id="PRO_0000416943" description="CRISPR-associated endoribonuclease Cas2">
    <location>
        <begin position="1"/>
        <end position="102"/>
    </location>
</feature>
<feature type="binding site" evidence="2">
    <location>
        <position position="14"/>
    </location>
    <ligand>
        <name>Mg(2+)</name>
        <dbReference type="ChEBI" id="CHEBI:18420"/>
        <note>catalytic</note>
    </ligand>
</feature>
<feature type="strand" evidence="5">
    <location>
        <begin position="7"/>
        <end position="14"/>
    </location>
</feature>
<feature type="helix" evidence="5">
    <location>
        <begin position="20"/>
        <end position="33"/>
    </location>
</feature>
<feature type="helix" evidence="5">
    <location>
        <begin position="34"/>
        <end position="36"/>
    </location>
</feature>
<feature type="strand" evidence="5">
    <location>
        <begin position="37"/>
        <end position="41"/>
    </location>
</feature>
<feature type="strand" evidence="5">
    <location>
        <begin position="44"/>
        <end position="49"/>
    </location>
</feature>
<feature type="helix" evidence="5">
    <location>
        <begin position="51"/>
        <end position="64"/>
    </location>
</feature>
<feature type="turn" evidence="5">
    <location>
        <begin position="67"/>
        <end position="69"/>
    </location>
</feature>
<feature type="strand" evidence="5">
    <location>
        <begin position="71"/>
        <end position="78"/>
    </location>
</feature>
<feature type="helix" evidence="5">
    <location>
        <begin position="81"/>
        <end position="84"/>
    </location>
</feature>
<feature type="strand" evidence="5">
    <location>
        <begin position="85"/>
        <end position="90"/>
    </location>
</feature>
<feature type="strand" evidence="5">
    <location>
        <begin position="93"/>
        <end position="95"/>
    </location>
</feature>
<dbReference type="EC" id="3.1.-.-"/>
<dbReference type="EMBL" id="AE017286">
    <property type="protein sequence ID" value="AAS94461.1"/>
    <property type="molecule type" value="Genomic_DNA"/>
</dbReference>
<dbReference type="RefSeq" id="YP_009175.1">
    <property type="nucleotide sequence ID" value="NC_005863.1"/>
</dbReference>
<dbReference type="PDB" id="3OQ2">
    <property type="method" value="X-ray"/>
    <property type="resolution" value="1.35 A"/>
    <property type="chains" value="A/B=1-102"/>
</dbReference>
<dbReference type="PDBsum" id="3OQ2"/>
<dbReference type="SMR" id="Q72WF4"/>
<dbReference type="EnsemblBacteria" id="AAS94461">
    <property type="protein sequence ID" value="AAS94461"/>
    <property type="gene ID" value="DVUA0135"/>
</dbReference>
<dbReference type="KEGG" id="dvu:DVUA0135"/>
<dbReference type="PATRIC" id="fig|882.5.peg.3225"/>
<dbReference type="HOGENOM" id="CLU_161124_3_1_7"/>
<dbReference type="OrthoDB" id="9798176at2"/>
<dbReference type="PhylomeDB" id="Q72WF4"/>
<dbReference type="EvolutionaryTrace" id="Q72WF4"/>
<dbReference type="Proteomes" id="UP000002194">
    <property type="component" value="Plasmid pDV"/>
</dbReference>
<dbReference type="GO" id="GO:0046872">
    <property type="term" value="F:metal ion binding"/>
    <property type="evidence" value="ECO:0007669"/>
    <property type="project" value="UniProtKB-UniRule"/>
</dbReference>
<dbReference type="GO" id="GO:0004521">
    <property type="term" value="F:RNA endonuclease activity"/>
    <property type="evidence" value="ECO:0007669"/>
    <property type="project" value="InterPro"/>
</dbReference>
<dbReference type="GO" id="GO:0051607">
    <property type="term" value="P:defense response to virus"/>
    <property type="evidence" value="ECO:0007669"/>
    <property type="project" value="UniProtKB-UniRule"/>
</dbReference>
<dbReference type="GO" id="GO:0043571">
    <property type="term" value="P:maintenance of CRISPR repeat elements"/>
    <property type="evidence" value="ECO:0007669"/>
    <property type="project" value="UniProtKB-UniRule"/>
</dbReference>
<dbReference type="CDD" id="cd09725">
    <property type="entry name" value="Cas2_I_II_III"/>
    <property type="match status" value="1"/>
</dbReference>
<dbReference type="Gene3D" id="3.30.70.240">
    <property type="match status" value="1"/>
</dbReference>
<dbReference type="HAMAP" id="MF_01471">
    <property type="entry name" value="Cas2"/>
    <property type="match status" value="1"/>
</dbReference>
<dbReference type="InterPro" id="IPR021127">
    <property type="entry name" value="CRISPR_associated_Cas2"/>
</dbReference>
<dbReference type="InterPro" id="IPR019199">
    <property type="entry name" value="Virulence_VapD/CRISPR_Cas2"/>
</dbReference>
<dbReference type="NCBIfam" id="TIGR01573">
    <property type="entry name" value="cas2"/>
    <property type="match status" value="1"/>
</dbReference>
<dbReference type="PANTHER" id="PTHR34405">
    <property type="entry name" value="CRISPR-ASSOCIATED ENDORIBONUCLEASE CAS2"/>
    <property type="match status" value="1"/>
</dbReference>
<dbReference type="PANTHER" id="PTHR34405:SF3">
    <property type="entry name" value="CRISPR-ASSOCIATED ENDORIBONUCLEASE CAS2 3"/>
    <property type="match status" value="1"/>
</dbReference>
<dbReference type="Pfam" id="PF09827">
    <property type="entry name" value="CRISPR_Cas2"/>
    <property type="match status" value="1"/>
</dbReference>
<dbReference type="PIRSF" id="PIRSF032582">
    <property type="entry name" value="Cas2"/>
    <property type="match status" value="1"/>
</dbReference>
<dbReference type="SUPFAM" id="SSF143430">
    <property type="entry name" value="TTP0101/SSO1404-like"/>
    <property type="match status" value="1"/>
</dbReference>
<protein>
    <recommendedName>
        <fullName>CRISPR-associated endoribonuclease Cas2</fullName>
        <ecNumber>3.1.-.-</ecNumber>
    </recommendedName>
</protein>
<name>CAS2_NITV2</name>
<organism>
    <name type="scientific">Nitratidesulfovibrio vulgaris (strain ATCC 29579 / DSM 644 / CCUG 34227 / NCIMB 8303 / VKM B-1760 / Hildenborough)</name>
    <name type="common">Desulfovibrio vulgaris</name>
    <dbReference type="NCBI Taxonomy" id="882"/>
    <lineage>
        <taxon>Bacteria</taxon>
        <taxon>Pseudomonadati</taxon>
        <taxon>Thermodesulfobacteriota</taxon>
        <taxon>Desulfovibrionia</taxon>
        <taxon>Desulfovibrionales</taxon>
        <taxon>Desulfovibrionaceae</taxon>
        <taxon>Nitratidesulfovibrio</taxon>
    </lineage>
</organism>
<reference key="1">
    <citation type="journal article" date="2004" name="Nat. Biotechnol.">
        <title>The genome sequence of the anaerobic, sulfate-reducing bacterium Desulfovibrio vulgaris Hildenborough.</title>
        <authorList>
            <person name="Heidelberg J.F."/>
            <person name="Seshadri R."/>
            <person name="Haveman S.A."/>
            <person name="Hemme C.L."/>
            <person name="Paulsen I.T."/>
            <person name="Kolonay J.F."/>
            <person name="Eisen J.A."/>
            <person name="Ward N.L."/>
            <person name="Methe B.A."/>
            <person name="Brinkac L.M."/>
            <person name="Daugherty S.C."/>
            <person name="DeBoy R.T."/>
            <person name="Dodson R.J."/>
            <person name="Durkin A.S."/>
            <person name="Madupu R."/>
            <person name="Nelson W.C."/>
            <person name="Sullivan S.A."/>
            <person name="Fouts D.E."/>
            <person name="Haft D.H."/>
            <person name="Selengut J."/>
            <person name="Peterson J.D."/>
            <person name="Davidsen T.M."/>
            <person name="Zafar N."/>
            <person name="Zhou L."/>
            <person name="Radune D."/>
            <person name="Dimitrov G."/>
            <person name="Hance M."/>
            <person name="Tran K."/>
            <person name="Khouri H.M."/>
            <person name="Gill J."/>
            <person name="Utterback T.R."/>
            <person name="Feldblyum T.V."/>
            <person name="Wall J.D."/>
            <person name="Voordouw G."/>
            <person name="Fraser C.M."/>
        </authorList>
    </citation>
    <scope>NUCLEOTIDE SEQUENCE [LARGE SCALE GENOMIC DNA]</scope>
    <source>
        <strain>ATCC 29579 / DSM 644 / CCUG 34227 / NCIMB 8303 / VKM B-1760 / Hildenborough</strain>
    </source>
</reference>
<reference key="2">
    <citation type="journal article" date="2010" name="Acta Crystallogr. F">
        <title>Structure of a CRISPR-associated protein Cas2 from Desulfovibrio vulgaris.</title>
        <authorList>
            <person name="Samai P."/>
            <person name="Smith P."/>
            <person name="Shuman S."/>
        </authorList>
    </citation>
    <scope>X-RAY CRYSTALLOGRAPHY (1.35 ANGSTROMS)</scope>
    <scope>SUBUNIT</scope>
    <source>
        <strain>ATCC 29579 / DSM 644 / CCUG 34227 / NCIMB 8303 / VKM B-1760 / Hildenborough</strain>
    </source>
</reference>
<evidence type="ECO:0000250" key="1"/>
<evidence type="ECO:0000255" key="2"/>
<evidence type="ECO:0000269" key="3">
    <source>
    </source>
</evidence>
<evidence type="ECO:0000305" key="4"/>
<evidence type="ECO:0007829" key="5">
    <source>
        <dbReference type="PDB" id="3OQ2"/>
    </source>
</evidence>
<accession>Q72WF4</accession>
<proteinExistence type="evidence at protein level"/>
<gene>
    <name type="primary">cas2</name>
    <name type="ordered locus">DVUA0135</name>
</gene>
<sequence length="102" mass="11843">MYGNDAMLVLISYDVSFEDPGGQRRLRRIAKACQDYGQRVQYSVFECVVDPAQWAKLKHRLLSEMDKEKDCLRFYYLGANWRNKVEHVGAKPAYDPEGPLIL</sequence>